<protein>
    <recommendedName>
        <fullName evidence="1">Large ribosomal subunit protein bL12</fullName>
    </recommendedName>
    <alternativeName>
        <fullName evidence="2">50S ribosomal protein L7/L12</fullName>
    </alternativeName>
</protein>
<proteinExistence type="inferred from homology"/>
<reference key="1">
    <citation type="submission" date="2009-06" db="EMBL/GenBank/DDBJ databases">
        <title>Complete sequence of Thermotogales bacterium TBF 19.5.1.</title>
        <authorList>
            <consortium name="US DOE Joint Genome Institute"/>
            <person name="Lucas S."/>
            <person name="Copeland A."/>
            <person name="Lapidus A."/>
            <person name="Glavina del Rio T."/>
            <person name="Tice H."/>
            <person name="Bruce D."/>
            <person name="Goodwin L."/>
            <person name="Pitluck S."/>
            <person name="Chertkov O."/>
            <person name="Brettin T."/>
            <person name="Detter J.C."/>
            <person name="Han C."/>
            <person name="Schmutz J."/>
            <person name="Larimer F."/>
            <person name="Land M."/>
            <person name="Hauser L."/>
            <person name="Kyrpides N."/>
            <person name="Ovchinnikova G."/>
            <person name="Noll K."/>
        </authorList>
    </citation>
    <scope>NUCLEOTIDE SEQUENCE [LARGE SCALE GENOMIC DNA]</scope>
    <source>
        <strain>ATCC BAA-1733 / DSM 21960 / TBF 19.5.1</strain>
    </source>
</reference>
<feature type="chain" id="PRO_1000205562" description="Large ribosomal subunit protein bL12">
    <location>
        <begin position="1"/>
        <end position="128"/>
    </location>
</feature>
<dbReference type="EMBL" id="CP001634">
    <property type="protein sequence ID" value="ACR80521.1"/>
    <property type="molecule type" value="Genomic_DNA"/>
</dbReference>
<dbReference type="RefSeq" id="WP_015869164.1">
    <property type="nucleotide sequence ID" value="NC_012785.1"/>
</dbReference>
<dbReference type="SMR" id="C5CGE0"/>
<dbReference type="STRING" id="521045.Kole_1839"/>
<dbReference type="KEGG" id="kol:Kole_1839"/>
<dbReference type="eggNOG" id="COG0222">
    <property type="taxonomic scope" value="Bacteria"/>
</dbReference>
<dbReference type="HOGENOM" id="CLU_086499_3_2_0"/>
<dbReference type="OrthoDB" id="9811748at2"/>
<dbReference type="Proteomes" id="UP000002382">
    <property type="component" value="Chromosome"/>
</dbReference>
<dbReference type="GO" id="GO:0022625">
    <property type="term" value="C:cytosolic large ribosomal subunit"/>
    <property type="evidence" value="ECO:0007669"/>
    <property type="project" value="TreeGrafter"/>
</dbReference>
<dbReference type="GO" id="GO:0003729">
    <property type="term" value="F:mRNA binding"/>
    <property type="evidence" value="ECO:0007669"/>
    <property type="project" value="TreeGrafter"/>
</dbReference>
<dbReference type="GO" id="GO:0003735">
    <property type="term" value="F:structural constituent of ribosome"/>
    <property type="evidence" value="ECO:0007669"/>
    <property type="project" value="InterPro"/>
</dbReference>
<dbReference type="GO" id="GO:0006412">
    <property type="term" value="P:translation"/>
    <property type="evidence" value="ECO:0007669"/>
    <property type="project" value="UniProtKB-UniRule"/>
</dbReference>
<dbReference type="CDD" id="cd00387">
    <property type="entry name" value="Ribosomal_L7_L12"/>
    <property type="match status" value="1"/>
</dbReference>
<dbReference type="FunFam" id="3.30.1390.10:FF:000001">
    <property type="entry name" value="50S ribosomal protein L7/L12"/>
    <property type="match status" value="1"/>
</dbReference>
<dbReference type="Gene3D" id="3.30.1390.10">
    <property type="match status" value="1"/>
</dbReference>
<dbReference type="Gene3D" id="1.20.5.710">
    <property type="entry name" value="Single helix bin"/>
    <property type="match status" value="1"/>
</dbReference>
<dbReference type="HAMAP" id="MF_00368">
    <property type="entry name" value="Ribosomal_bL12"/>
    <property type="match status" value="1"/>
</dbReference>
<dbReference type="InterPro" id="IPR000206">
    <property type="entry name" value="Ribosomal_bL12"/>
</dbReference>
<dbReference type="InterPro" id="IPR013823">
    <property type="entry name" value="Ribosomal_bL12_C"/>
</dbReference>
<dbReference type="InterPro" id="IPR014719">
    <property type="entry name" value="Ribosomal_bL12_C/ClpS-like"/>
</dbReference>
<dbReference type="InterPro" id="IPR008932">
    <property type="entry name" value="Ribosomal_bL12_oligo"/>
</dbReference>
<dbReference type="InterPro" id="IPR036235">
    <property type="entry name" value="Ribosomal_bL12_oligo_N_sf"/>
</dbReference>
<dbReference type="NCBIfam" id="TIGR00855">
    <property type="entry name" value="L12"/>
    <property type="match status" value="1"/>
</dbReference>
<dbReference type="PANTHER" id="PTHR45987">
    <property type="entry name" value="39S RIBOSOMAL PROTEIN L12"/>
    <property type="match status" value="1"/>
</dbReference>
<dbReference type="PANTHER" id="PTHR45987:SF4">
    <property type="entry name" value="LARGE RIBOSOMAL SUBUNIT PROTEIN BL12M"/>
    <property type="match status" value="1"/>
</dbReference>
<dbReference type="Pfam" id="PF00542">
    <property type="entry name" value="Ribosomal_L12"/>
    <property type="match status" value="1"/>
</dbReference>
<dbReference type="Pfam" id="PF16320">
    <property type="entry name" value="Ribosomal_L12_N"/>
    <property type="match status" value="1"/>
</dbReference>
<dbReference type="SUPFAM" id="SSF54736">
    <property type="entry name" value="ClpS-like"/>
    <property type="match status" value="1"/>
</dbReference>
<dbReference type="SUPFAM" id="SSF48300">
    <property type="entry name" value="Ribosomal protein L7/12, oligomerisation (N-terminal) domain"/>
    <property type="match status" value="1"/>
</dbReference>
<keyword id="KW-1185">Reference proteome</keyword>
<keyword id="KW-0687">Ribonucleoprotein</keyword>
<keyword id="KW-0689">Ribosomal protein</keyword>
<gene>
    <name evidence="1" type="primary">rplL</name>
    <name type="ordered locus">Kole_1839</name>
</gene>
<accession>C5CGE0</accession>
<evidence type="ECO:0000255" key="1">
    <source>
        <dbReference type="HAMAP-Rule" id="MF_00368"/>
    </source>
</evidence>
<evidence type="ECO:0000305" key="2"/>
<comment type="function">
    <text evidence="1">Forms part of the ribosomal stalk which helps the ribosome interact with GTP-bound translation factors. Is thus essential for accurate translation.</text>
</comment>
<comment type="subunit">
    <text evidence="1">Homodimer. Part of the ribosomal stalk of the 50S ribosomal subunit. Forms a multimeric L10(L12)X complex, where L10 forms an elongated spine to which 2 to 4 L12 dimers bind in a sequential fashion. Binds GTP-bound translation factors.</text>
</comment>
<comment type="similarity">
    <text evidence="1">Belongs to the bacterial ribosomal protein bL12 family.</text>
</comment>
<name>RL7_KOSOT</name>
<organism>
    <name type="scientific">Kosmotoga olearia (strain ATCC BAA-1733 / DSM 21960 / TBF 19.5.1)</name>
    <dbReference type="NCBI Taxonomy" id="521045"/>
    <lineage>
        <taxon>Bacteria</taxon>
        <taxon>Thermotogati</taxon>
        <taxon>Thermotogota</taxon>
        <taxon>Thermotogae</taxon>
        <taxon>Kosmotogales</taxon>
        <taxon>Kosmotogaceae</taxon>
        <taxon>Kosmotoga</taxon>
    </lineage>
</organism>
<sequence length="128" mass="13480">MTKEELIQAIKEMTVAELAELVKALEEEFGVSASAPVAVAAMPGAAGGQAAQEEEKTEFNVVLKSFGDKKIAVIKAVRAITGLGLKEAKELVEKAGSPDAIIKEGISKSEAEEIKKQLEEAGAEVELK</sequence>